<comment type="alternative products">
    <event type="alternative splicing"/>
    <isoform>
        <id>Q5VVW2-1</id>
        <name>1</name>
        <sequence type="displayed"/>
    </isoform>
    <isoform>
        <id>Q5VVW2-2</id>
        <name>2</name>
        <sequence type="described" ref="VSP_029743 VSP_029744"/>
    </isoform>
    <isoform>
        <id>Q5VVW2-3</id>
        <name>3</name>
        <sequence type="described" ref="VSP_029740 VSP_029741 VSP_029742"/>
    </isoform>
    <isoform>
        <id>Q5VVW2-4</id>
        <name>4</name>
        <sequence type="described" ref="VSP_029745"/>
    </isoform>
    <isoform>
        <id>Q5VVW2-5</id>
        <name>5</name>
        <sequence type="described" ref="VSP_054875"/>
    </isoform>
</comment>
<comment type="similarity">
    <text evidence="9">Belongs to the GARNL3 family.</text>
</comment>
<comment type="caution">
    <text evidence="9">It is uncertain whether Met-1 or Met-19 is the initiator.</text>
</comment>
<comment type="sequence caution" evidence="9">
    <conflict type="erroneous initiation">
        <sequence resource="EMBL-CDS" id="AAH34983"/>
    </conflict>
</comment>
<comment type="sequence caution" evidence="9">
    <conflict type="erroneous initiation">
        <sequence resource="EMBL-CDS" id="CAB66508"/>
    </conflict>
</comment>
<protein>
    <recommendedName>
        <fullName>GTPase-activating Rap/Ran-GAP domain-like protein 3</fullName>
    </recommendedName>
</protein>
<reference key="1">
    <citation type="journal article" date="2004" name="Nat. Genet.">
        <title>Complete sequencing and characterization of 21,243 full-length human cDNAs.</title>
        <authorList>
            <person name="Ota T."/>
            <person name="Suzuki Y."/>
            <person name="Nishikawa T."/>
            <person name="Otsuki T."/>
            <person name="Sugiyama T."/>
            <person name="Irie R."/>
            <person name="Wakamatsu A."/>
            <person name="Hayashi K."/>
            <person name="Sato H."/>
            <person name="Nagai K."/>
            <person name="Kimura K."/>
            <person name="Makita H."/>
            <person name="Sekine M."/>
            <person name="Obayashi M."/>
            <person name="Nishi T."/>
            <person name="Shibahara T."/>
            <person name="Tanaka T."/>
            <person name="Ishii S."/>
            <person name="Yamamoto J."/>
            <person name="Saito K."/>
            <person name="Kawai Y."/>
            <person name="Isono Y."/>
            <person name="Nakamura Y."/>
            <person name="Nagahari K."/>
            <person name="Murakami K."/>
            <person name="Yasuda T."/>
            <person name="Iwayanagi T."/>
            <person name="Wagatsuma M."/>
            <person name="Shiratori A."/>
            <person name="Sudo H."/>
            <person name="Hosoiri T."/>
            <person name="Kaku Y."/>
            <person name="Kodaira H."/>
            <person name="Kondo H."/>
            <person name="Sugawara M."/>
            <person name="Takahashi M."/>
            <person name="Kanda K."/>
            <person name="Yokoi T."/>
            <person name="Furuya T."/>
            <person name="Kikkawa E."/>
            <person name="Omura Y."/>
            <person name="Abe K."/>
            <person name="Kamihara K."/>
            <person name="Katsuta N."/>
            <person name="Sato K."/>
            <person name="Tanikawa M."/>
            <person name="Yamazaki M."/>
            <person name="Ninomiya K."/>
            <person name="Ishibashi T."/>
            <person name="Yamashita H."/>
            <person name="Murakawa K."/>
            <person name="Fujimori K."/>
            <person name="Tanai H."/>
            <person name="Kimata M."/>
            <person name="Watanabe M."/>
            <person name="Hiraoka S."/>
            <person name="Chiba Y."/>
            <person name="Ishida S."/>
            <person name="Ono Y."/>
            <person name="Takiguchi S."/>
            <person name="Watanabe S."/>
            <person name="Yosida M."/>
            <person name="Hotuta T."/>
            <person name="Kusano J."/>
            <person name="Kanehori K."/>
            <person name="Takahashi-Fujii A."/>
            <person name="Hara H."/>
            <person name="Tanase T.-O."/>
            <person name="Nomura Y."/>
            <person name="Togiya S."/>
            <person name="Komai F."/>
            <person name="Hara R."/>
            <person name="Takeuchi K."/>
            <person name="Arita M."/>
            <person name="Imose N."/>
            <person name="Musashino K."/>
            <person name="Yuuki H."/>
            <person name="Oshima A."/>
            <person name="Sasaki N."/>
            <person name="Aotsuka S."/>
            <person name="Yoshikawa Y."/>
            <person name="Matsunawa H."/>
            <person name="Ichihara T."/>
            <person name="Shiohata N."/>
            <person name="Sano S."/>
            <person name="Moriya S."/>
            <person name="Momiyama H."/>
            <person name="Satoh N."/>
            <person name="Takami S."/>
            <person name="Terashima Y."/>
            <person name="Suzuki O."/>
            <person name="Nakagawa S."/>
            <person name="Senoh A."/>
            <person name="Mizoguchi H."/>
            <person name="Goto Y."/>
            <person name="Shimizu F."/>
            <person name="Wakebe H."/>
            <person name="Hishigaki H."/>
            <person name="Watanabe T."/>
            <person name="Sugiyama A."/>
            <person name="Takemoto M."/>
            <person name="Kawakami B."/>
            <person name="Yamazaki M."/>
            <person name="Watanabe K."/>
            <person name="Kumagai A."/>
            <person name="Itakura S."/>
            <person name="Fukuzumi Y."/>
            <person name="Fujimori Y."/>
            <person name="Komiyama M."/>
            <person name="Tashiro H."/>
            <person name="Tanigami A."/>
            <person name="Fujiwara T."/>
            <person name="Ono T."/>
            <person name="Yamada K."/>
            <person name="Fujii Y."/>
            <person name="Ozaki K."/>
            <person name="Hirao M."/>
            <person name="Ohmori Y."/>
            <person name="Kawabata A."/>
            <person name="Hikiji T."/>
            <person name="Kobatake N."/>
            <person name="Inagaki H."/>
            <person name="Ikema Y."/>
            <person name="Okamoto S."/>
            <person name="Okitani R."/>
            <person name="Kawakami T."/>
            <person name="Noguchi S."/>
            <person name="Itoh T."/>
            <person name="Shigeta K."/>
            <person name="Senba T."/>
            <person name="Matsumura K."/>
            <person name="Nakajima Y."/>
            <person name="Mizuno T."/>
            <person name="Morinaga M."/>
            <person name="Sasaki M."/>
            <person name="Togashi T."/>
            <person name="Oyama M."/>
            <person name="Hata H."/>
            <person name="Watanabe M."/>
            <person name="Komatsu T."/>
            <person name="Mizushima-Sugano J."/>
            <person name="Satoh T."/>
            <person name="Shirai Y."/>
            <person name="Takahashi Y."/>
            <person name="Nakagawa K."/>
            <person name="Okumura K."/>
            <person name="Nagase T."/>
            <person name="Nomura N."/>
            <person name="Kikuchi H."/>
            <person name="Masuho Y."/>
            <person name="Yamashita R."/>
            <person name="Nakai K."/>
            <person name="Yada T."/>
            <person name="Nakamura Y."/>
            <person name="Ohara O."/>
            <person name="Isogai T."/>
            <person name="Sugano S."/>
        </authorList>
    </citation>
    <scope>NUCLEOTIDE SEQUENCE [LARGE SCALE MRNA] (ISOFORMS 1; 3 AND 5)</scope>
    <source>
        <tissue>Brain</tissue>
        <tissue>Cerebellum</tissue>
        <tissue>Thalamus</tissue>
    </source>
</reference>
<reference key="2">
    <citation type="journal article" date="2007" name="BMC Genomics">
        <title>The full-ORF clone resource of the German cDNA consortium.</title>
        <authorList>
            <person name="Bechtel S."/>
            <person name="Rosenfelder H."/>
            <person name="Duda A."/>
            <person name="Schmidt C.P."/>
            <person name="Ernst U."/>
            <person name="Wellenreuther R."/>
            <person name="Mehrle A."/>
            <person name="Schuster C."/>
            <person name="Bahr A."/>
            <person name="Bloecker H."/>
            <person name="Heubner D."/>
            <person name="Hoerlein A."/>
            <person name="Michel G."/>
            <person name="Wedler H."/>
            <person name="Koehrer K."/>
            <person name="Ottenwaelder B."/>
            <person name="Poustka A."/>
            <person name="Wiemann S."/>
            <person name="Schupp I."/>
        </authorList>
    </citation>
    <scope>NUCLEOTIDE SEQUENCE [LARGE SCALE MRNA] (ISOFORM 4)</scope>
    <source>
        <tissue>Testis</tissue>
    </source>
</reference>
<reference key="3">
    <citation type="journal article" date="2004" name="Nature">
        <title>DNA sequence and analysis of human chromosome 9.</title>
        <authorList>
            <person name="Humphray S.J."/>
            <person name="Oliver K."/>
            <person name="Hunt A.R."/>
            <person name="Plumb R.W."/>
            <person name="Loveland J.E."/>
            <person name="Howe K.L."/>
            <person name="Andrews T.D."/>
            <person name="Searle S."/>
            <person name="Hunt S.E."/>
            <person name="Scott C.E."/>
            <person name="Jones M.C."/>
            <person name="Ainscough R."/>
            <person name="Almeida J.P."/>
            <person name="Ambrose K.D."/>
            <person name="Ashwell R.I.S."/>
            <person name="Babbage A.K."/>
            <person name="Babbage S."/>
            <person name="Bagguley C.L."/>
            <person name="Bailey J."/>
            <person name="Banerjee R."/>
            <person name="Barker D.J."/>
            <person name="Barlow K.F."/>
            <person name="Bates K."/>
            <person name="Beasley H."/>
            <person name="Beasley O."/>
            <person name="Bird C.P."/>
            <person name="Bray-Allen S."/>
            <person name="Brown A.J."/>
            <person name="Brown J.Y."/>
            <person name="Burford D."/>
            <person name="Burrill W."/>
            <person name="Burton J."/>
            <person name="Carder C."/>
            <person name="Carter N.P."/>
            <person name="Chapman J.C."/>
            <person name="Chen Y."/>
            <person name="Clarke G."/>
            <person name="Clark S.Y."/>
            <person name="Clee C.M."/>
            <person name="Clegg S."/>
            <person name="Collier R.E."/>
            <person name="Corby N."/>
            <person name="Crosier M."/>
            <person name="Cummings A.T."/>
            <person name="Davies J."/>
            <person name="Dhami P."/>
            <person name="Dunn M."/>
            <person name="Dutta I."/>
            <person name="Dyer L.W."/>
            <person name="Earthrowl M.E."/>
            <person name="Faulkner L."/>
            <person name="Fleming C.J."/>
            <person name="Frankish A."/>
            <person name="Frankland J.A."/>
            <person name="French L."/>
            <person name="Fricker D.G."/>
            <person name="Garner P."/>
            <person name="Garnett J."/>
            <person name="Ghori J."/>
            <person name="Gilbert J.G.R."/>
            <person name="Glison C."/>
            <person name="Grafham D.V."/>
            <person name="Gribble S."/>
            <person name="Griffiths C."/>
            <person name="Griffiths-Jones S."/>
            <person name="Grocock R."/>
            <person name="Guy J."/>
            <person name="Hall R.E."/>
            <person name="Hammond S."/>
            <person name="Harley J.L."/>
            <person name="Harrison E.S.I."/>
            <person name="Hart E.A."/>
            <person name="Heath P.D."/>
            <person name="Henderson C.D."/>
            <person name="Hopkins B.L."/>
            <person name="Howard P.J."/>
            <person name="Howden P.J."/>
            <person name="Huckle E."/>
            <person name="Johnson C."/>
            <person name="Johnson D."/>
            <person name="Joy A.A."/>
            <person name="Kay M."/>
            <person name="Keenan S."/>
            <person name="Kershaw J.K."/>
            <person name="Kimberley A.M."/>
            <person name="King A."/>
            <person name="Knights A."/>
            <person name="Laird G.K."/>
            <person name="Langford C."/>
            <person name="Lawlor S."/>
            <person name="Leongamornlert D.A."/>
            <person name="Leversha M."/>
            <person name="Lloyd C."/>
            <person name="Lloyd D.M."/>
            <person name="Lovell J."/>
            <person name="Martin S."/>
            <person name="Mashreghi-Mohammadi M."/>
            <person name="Matthews L."/>
            <person name="McLaren S."/>
            <person name="McLay K.E."/>
            <person name="McMurray A."/>
            <person name="Milne S."/>
            <person name="Nickerson T."/>
            <person name="Nisbett J."/>
            <person name="Nordsiek G."/>
            <person name="Pearce A.V."/>
            <person name="Peck A.I."/>
            <person name="Porter K.M."/>
            <person name="Pandian R."/>
            <person name="Pelan S."/>
            <person name="Phillimore B."/>
            <person name="Povey S."/>
            <person name="Ramsey Y."/>
            <person name="Rand V."/>
            <person name="Scharfe M."/>
            <person name="Sehra H.K."/>
            <person name="Shownkeen R."/>
            <person name="Sims S.K."/>
            <person name="Skuce C.D."/>
            <person name="Smith M."/>
            <person name="Steward C.A."/>
            <person name="Swarbreck D."/>
            <person name="Sycamore N."/>
            <person name="Tester J."/>
            <person name="Thorpe A."/>
            <person name="Tracey A."/>
            <person name="Tromans A."/>
            <person name="Thomas D.W."/>
            <person name="Wall M."/>
            <person name="Wallis J.M."/>
            <person name="West A.P."/>
            <person name="Whitehead S.L."/>
            <person name="Willey D.L."/>
            <person name="Williams S.A."/>
            <person name="Wilming L."/>
            <person name="Wray P.W."/>
            <person name="Young L."/>
            <person name="Ashurst J.L."/>
            <person name="Coulson A."/>
            <person name="Blocker H."/>
            <person name="Durbin R.M."/>
            <person name="Sulston J.E."/>
            <person name="Hubbard T."/>
            <person name="Jackson M.J."/>
            <person name="Bentley D.R."/>
            <person name="Beck S."/>
            <person name="Rogers J."/>
            <person name="Dunham I."/>
        </authorList>
    </citation>
    <scope>NUCLEOTIDE SEQUENCE [LARGE SCALE GENOMIC DNA]</scope>
</reference>
<reference key="4">
    <citation type="submission" date="2005-07" db="EMBL/GenBank/DDBJ databases">
        <authorList>
            <person name="Mural R.J."/>
            <person name="Istrail S."/>
            <person name="Sutton G.G."/>
            <person name="Florea L."/>
            <person name="Halpern A.L."/>
            <person name="Mobarry C.M."/>
            <person name="Lippert R."/>
            <person name="Walenz B."/>
            <person name="Shatkay H."/>
            <person name="Dew I."/>
            <person name="Miller J.R."/>
            <person name="Flanigan M.J."/>
            <person name="Edwards N.J."/>
            <person name="Bolanos R."/>
            <person name="Fasulo D."/>
            <person name="Halldorsson B.V."/>
            <person name="Hannenhalli S."/>
            <person name="Turner R."/>
            <person name="Yooseph S."/>
            <person name="Lu F."/>
            <person name="Nusskern D.R."/>
            <person name="Shue B.C."/>
            <person name="Zheng X.H."/>
            <person name="Zhong F."/>
            <person name="Delcher A.L."/>
            <person name="Huson D.H."/>
            <person name="Kravitz S.A."/>
            <person name="Mouchard L."/>
            <person name="Reinert K."/>
            <person name="Remington K.A."/>
            <person name="Clark A.G."/>
            <person name="Waterman M.S."/>
            <person name="Eichler E.E."/>
            <person name="Adams M.D."/>
            <person name="Hunkapiller M.W."/>
            <person name="Myers E.W."/>
            <person name="Venter J.C."/>
        </authorList>
    </citation>
    <scope>NUCLEOTIDE SEQUENCE [LARGE SCALE GENOMIC DNA]</scope>
</reference>
<reference key="5">
    <citation type="journal article" date="2004" name="Genome Res.">
        <title>The status, quality, and expansion of the NIH full-length cDNA project: the Mammalian Gene Collection (MGC).</title>
        <authorList>
            <consortium name="The MGC Project Team"/>
        </authorList>
    </citation>
    <scope>NUCLEOTIDE SEQUENCE [LARGE SCALE MRNA] (ISOFORM 1)</scope>
    <scope>VARIANT ARG-108</scope>
    <source>
        <tissue>Brain</tissue>
    </source>
</reference>
<reference key="6">
    <citation type="journal article" date="2001" name="Genome Res.">
        <title>Towards a catalog of human genes and proteins: sequencing and analysis of 500 novel complete protein coding human cDNAs.</title>
        <authorList>
            <person name="Wiemann S."/>
            <person name="Weil B."/>
            <person name="Wellenreuther R."/>
            <person name="Gassenhuber J."/>
            <person name="Glassl S."/>
            <person name="Ansorge W."/>
            <person name="Boecher M."/>
            <person name="Bloecker H."/>
            <person name="Bauersachs S."/>
            <person name="Blum H."/>
            <person name="Lauber J."/>
            <person name="Duesterhoeft A."/>
            <person name="Beyer A."/>
            <person name="Koehrer K."/>
            <person name="Strack N."/>
            <person name="Mewes H.-W."/>
            <person name="Ottenwaelder B."/>
            <person name="Obermaier B."/>
            <person name="Tampe J."/>
            <person name="Heubner D."/>
            <person name="Wambutt R."/>
            <person name="Korn B."/>
            <person name="Klein M."/>
            <person name="Poustka A."/>
        </authorList>
    </citation>
    <scope>NUCLEOTIDE SEQUENCE [LARGE SCALE MRNA] OF 16-1013 (ISOFORM 2)</scope>
    <source>
        <tissue>Amygdala</tissue>
    </source>
</reference>
<dbReference type="EMBL" id="AK095679">
    <property type="protein sequence ID" value="BAC04605.1"/>
    <property type="molecule type" value="mRNA"/>
</dbReference>
<dbReference type="EMBL" id="AK293732">
    <property type="protein sequence ID" value="BAG57158.1"/>
    <property type="molecule type" value="mRNA"/>
</dbReference>
<dbReference type="EMBL" id="AK296246">
    <property type="protein sequence ID" value="BAH12292.1"/>
    <property type="molecule type" value="mRNA"/>
</dbReference>
<dbReference type="EMBL" id="AL834149">
    <property type="protein sequence ID" value="CAD38860.1"/>
    <property type="molecule type" value="mRNA"/>
</dbReference>
<dbReference type="EMBL" id="AL445222">
    <property type="status" value="NOT_ANNOTATED_CDS"/>
    <property type="molecule type" value="Genomic_DNA"/>
</dbReference>
<dbReference type="EMBL" id="AL450263">
    <property type="status" value="NOT_ANNOTATED_CDS"/>
    <property type="molecule type" value="Genomic_DNA"/>
</dbReference>
<dbReference type="EMBL" id="CH471090">
    <property type="protein sequence ID" value="EAW87656.1"/>
    <property type="molecule type" value="Genomic_DNA"/>
</dbReference>
<dbReference type="EMBL" id="BC034983">
    <property type="protein sequence ID" value="AAH34983.1"/>
    <property type="status" value="ALT_INIT"/>
    <property type="molecule type" value="mRNA"/>
</dbReference>
<dbReference type="EMBL" id="AL136573">
    <property type="protein sequence ID" value="CAB66508.1"/>
    <property type="status" value="ALT_INIT"/>
    <property type="molecule type" value="mRNA"/>
</dbReference>
<dbReference type="CCDS" id="CCDS6869.2">
    <molecule id="Q5VVW2-1"/>
</dbReference>
<dbReference type="CCDS" id="CCDS69663.1">
    <molecule id="Q5VVW2-5"/>
</dbReference>
<dbReference type="RefSeq" id="NP_001273708.1">
    <molecule id="Q5VVW2-5"/>
    <property type="nucleotide sequence ID" value="NM_001286779.2"/>
</dbReference>
<dbReference type="RefSeq" id="NP_115669.3">
    <molecule id="Q5VVW2-1"/>
    <property type="nucleotide sequence ID" value="NM_032293.4"/>
</dbReference>
<dbReference type="SMR" id="Q5VVW2"/>
<dbReference type="BioGRID" id="123980">
    <property type="interactions" value="7"/>
</dbReference>
<dbReference type="FunCoup" id="Q5VVW2">
    <property type="interactions" value="777"/>
</dbReference>
<dbReference type="IntAct" id="Q5VVW2">
    <property type="interactions" value="1"/>
</dbReference>
<dbReference type="STRING" id="9606.ENSP00000362485"/>
<dbReference type="GlyGen" id="Q5VVW2">
    <property type="glycosylation" value="1 site"/>
</dbReference>
<dbReference type="iPTMnet" id="Q5VVW2"/>
<dbReference type="PhosphoSitePlus" id="Q5VVW2"/>
<dbReference type="BioMuta" id="GARNL3"/>
<dbReference type="DMDM" id="162416278"/>
<dbReference type="MassIVE" id="Q5VVW2"/>
<dbReference type="PaxDb" id="9606-ENSP00000362485"/>
<dbReference type="PeptideAtlas" id="Q5VVW2"/>
<dbReference type="ProteomicsDB" id="6539"/>
<dbReference type="ProteomicsDB" id="65495">
    <molecule id="Q5VVW2-1"/>
</dbReference>
<dbReference type="ProteomicsDB" id="65496">
    <molecule id="Q5VVW2-2"/>
</dbReference>
<dbReference type="ProteomicsDB" id="65497">
    <molecule id="Q5VVW2-3"/>
</dbReference>
<dbReference type="ProteomicsDB" id="65498">
    <molecule id="Q5VVW2-4"/>
</dbReference>
<dbReference type="Antibodypedia" id="16601">
    <property type="antibodies" value="47 antibodies from 11 providers"/>
</dbReference>
<dbReference type="DNASU" id="84253"/>
<dbReference type="Ensembl" id="ENST00000373387.9">
    <molecule id="Q5VVW2-1"/>
    <property type="protein sequence ID" value="ENSP00000362485.4"/>
    <property type="gene ID" value="ENSG00000136895.19"/>
</dbReference>
<dbReference type="Ensembl" id="ENST00000435213.6">
    <molecule id="Q5VVW2-5"/>
    <property type="protein sequence ID" value="ENSP00000396205.2"/>
    <property type="gene ID" value="ENSG00000136895.19"/>
</dbReference>
<dbReference type="GeneID" id="84253"/>
<dbReference type="KEGG" id="hsa:84253"/>
<dbReference type="MANE-Select" id="ENST00000373387.9">
    <property type="protein sequence ID" value="ENSP00000362485.4"/>
    <property type="RefSeq nucleotide sequence ID" value="NM_032293.5"/>
    <property type="RefSeq protein sequence ID" value="NP_115669.3"/>
</dbReference>
<dbReference type="UCSC" id="uc011mad.3">
    <molecule id="Q5VVW2-1"/>
    <property type="organism name" value="human"/>
</dbReference>
<dbReference type="AGR" id="HGNC:25425"/>
<dbReference type="CTD" id="84253"/>
<dbReference type="DisGeNET" id="84253"/>
<dbReference type="GeneCards" id="GARNL3"/>
<dbReference type="HGNC" id="HGNC:25425">
    <property type="gene designation" value="GARNL3"/>
</dbReference>
<dbReference type="HPA" id="ENSG00000136895">
    <property type="expression patterns" value="Low tissue specificity"/>
</dbReference>
<dbReference type="neXtProt" id="NX_Q5VVW2"/>
<dbReference type="OpenTargets" id="ENSG00000136895"/>
<dbReference type="PharmGKB" id="PA134861523"/>
<dbReference type="VEuPathDB" id="HostDB:ENSG00000136895"/>
<dbReference type="eggNOG" id="KOG3686">
    <property type="taxonomic scope" value="Eukaryota"/>
</dbReference>
<dbReference type="GeneTree" id="ENSGT00940000159362"/>
<dbReference type="HOGENOM" id="CLU_008685_1_0_1"/>
<dbReference type="InParanoid" id="Q5VVW2"/>
<dbReference type="OMA" id="FEGYSER"/>
<dbReference type="OrthoDB" id="2499658at2759"/>
<dbReference type="PAN-GO" id="Q5VVW2">
    <property type="GO annotations" value="3 GO annotations based on evolutionary models"/>
</dbReference>
<dbReference type="PhylomeDB" id="Q5VVW2"/>
<dbReference type="TreeFam" id="TF318626"/>
<dbReference type="PathwayCommons" id="Q5VVW2"/>
<dbReference type="SignaLink" id="Q5VVW2"/>
<dbReference type="BioGRID-ORCS" id="84253">
    <property type="hits" value="17 hits in 1149 CRISPR screens"/>
</dbReference>
<dbReference type="ChiTaRS" id="GARNL3">
    <property type="organism name" value="human"/>
</dbReference>
<dbReference type="GenomeRNAi" id="84253"/>
<dbReference type="Pharos" id="Q5VVW2">
    <property type="development level" value="Tdark"/>
</dbReference>
<dbReference type="PRO" id="PR:Q5VVW2"/>
<dbReference type="Proteomes" id="UP000005640">
    <property type="component" value="Chromosome 9"/>
</dbReference>
<dbReference type="RNAct" id="Q5VVW2">
    <property type="molecule type" value="protein"/>
</dbReference>
<dbReference type="Bgee" id="ENSG00000136895">
    <property type="expression patterns" value="Expressed in cerebellar hemisphere and 141 other cell types or tissues"/>
</dbReference>
<dbReference type="ExpressionAtlas" id="Q5VVW2">
    <property type="expression patterns" value="baseline and differential"/>
</dbReference>
<dbReference type="GO" id="GO:0005096">
    <property type="term" value="F:GTPase activator activity"/>
    <property type="evidence" value="ECO:0007669"/>
    <property type="project" value="UniProtKB-KW"/>
</dbReference>
<dbReference type="GO" id="GO:0051056">
    <property type="term" value="P:regulation of small GTPase mediated signal transduction"/>
    <property type="evidence" value="ECO:0007669"/>
    <property type="project" value="InterPro"/>
</dbReference>
<dbReference type="FunFam" id="3.40.50.11210:FF:000006">
    <property type="entry name" value="GTPase-activating Rap/Ran-GAP domain-like protein 3 isoform X1"/>
    <property type="match status" value="1"/>
</dbReference>
<dbReference type="Gene3D" id="3.40.50.11210">
    <property type="entry name" value="Rap/Ran-GAP"/>
    <property type="match status" value="1"/>
</dbReference>
<dbReference type="InterPro" id="IPR001180">
    <property type="entry name" value="CNH_dom"/>
</dbReference>
<dbReference type="InterPro" id="IPR035974">
    <property type="entry name" value="Rap/Ran-GAP_sf"/>
</dbReference>
<dbReference type="InterPro" id="IPR000331">
    <property type="entry name" value="Rap/Ran_GAP_dom"/>
</dbReference>
<dbReference type="InterPro" id="IPR050989">
    <property type="entry name" value="Rap1_Ran_GAP"/>
</dbReference>
<dbReference type="PANTHER" id="PTHR15711:SF62">
    <property type="entry name" value="GTPASE-ACTIVATING RAP_RAN-GAP DOMAIN-LIKE PROTEIN 3"/>
    <property type="match status" value="1"/>
</dbReference>
<dbReference type="PANTHER" id="PTHR15711">
    <property type="entry name" value="RAP GTPASE-ACTIVATING PROTEIN"/>
    <property type="match status" value="1"/>
</dbReference>
<dbReference type="Pfam" id="PF00780">
    <property type="entry name" value="CNH"/>
    <property type="match status" value="1"/>
</dbReference>
<dbReference type="Pfam" id="PF02145">
    <property type="entry name" value="Rap_GAP"/>
    <property type="match status" value="1"/>
</dbReference>
<dbReference type="SMART" id="SM00036">
    <property type="entry name" value="CNH"/>
    <property type="match status" value="1"/>
</dbReference>
<dbReference type="SUPFAM" id="SSF111347">
    <property type="entry name" value="Rap/Ran-GAP"/>
    <property type="match status" value="1"/>
</dbReference>
<dbReference type="PROSITE" id="PS50219">
    <property type="entry name" value="CNH"/>
    <property type="match status" value="1"/>
</dbReference>
<dbReference type="PROSITE" id="PS50085">
    <property type="entry name" value="RAPGAP"/>
    <property type="match status" value="1"/>
</dbReference>
<evidence type="ECO:0000250" key="1">
    <source>
        <dbReference type="UniProtKB" id="Q3V0G7"/>
    </source>
</evidence>
<evidence type="ECO:0000255" key="2">
    <source>
        <dbReference type="PROSITE-ProRule" id="PRU00165"/>
    </source>
</evidence>
<evidence type="ECO:0000255" key="3">
    <source>
        <dbReference type="PROSITE-ProRule" id="PRU00795"/>
    </source>
</evidence>
<evidence type="ECO:0000256" key="4">
    <source>
        <dbReference type="SAM" id="MobiDB-lite"/>
    </source>
</evidence>
<evidence type="ECO:0000269" key="5">
    <source>
    </source>
</evidence>
<evidence type="ECO:0000303" key="6">
    <source>
    </source>
</evidence>
<evidence type="ECO:0000303" key="7">
    <source>
    </source>
</evidence>
<evidence type="ECO:0000303" key="8">
    <source>
    </source>
</evidence>
<evidence type="ECO:0000305" key="9"/>
<accession>Q5VVW2</accession>
<accession>B4DEP7</accession>
<accession>B7Z3Q6</accession>
<accession>Q8IYU1</accession>
<accession>Q8N951</accession>
<accession>Q8ND89</accession>
<accession>Q9BQH6</accession>
<gene>
    <name type="primary">GARNL3</name>
</gene>
<keyword id="KW-0025">Alternative splicing</keyword>
<keyword id="KW-0343">GTPase activation</keyword>
<keyword id="KW-0597">Phosphoprotein</keyword>
<keyword id="KW-1267">Proteomics identification</keyword>
<keyword id="KW-1185">Reference proteome</keyword>
<sequence>MVVDFCRRFVARSLCIILMKHFCSSSVSEDLGCRRGDFSRKHYGSVELLISSDADGAIQRAGRFRVENGSSDENATALPGTWRRTDVHLENPEYHTRWYFKYFLGQVHQNYIGNDAEKSPFFLSVTLSDQNNQRVPQYRAILWRKTGTQKICLPYSPTKTLSVKSILSAMNLDKFEKGPREIFHPEIQKDLLVLEEQEGSVNFKFGVLFAKDGQLTDDEMFSNEIGSEPFQKFLNLLGDTITLKGWTGYRGGLDTKNDTTGIHSVYTVYQGHEIMFHVSTMLPYSKENKQQVERKRHIGNDIVTIVFQEGEESSPAFKPSMIRSHFTHIFALVRYNQQNDNYRLKIFSEESVPLFGPPLPTPPVFTDHQEFRDFLLVKLINGEKATLETPTFAQKRRRTLDMLIRSLHQDLMPDLHKNMLNRRSFSDVLPESPKSARKKEEARQAEFVRIGQALKLKSIVRGDAPSSLAASGICKKEPWEPQCFCSNFPHEAVCADPWGQALLVSTDAGVLLVDDDLPSVPVFDRTLPVKQMHVLETLDLLVLRADKGKDARLFVFRLSALQKGLEGKQAGKSRSDCRENKLEKTKGCHLYAINTHHSRELRIVVAIRNKLLLITRKHNKPSGVTSTSLLSPLSESPVEEFQYIREICLSDSPMVMTLVDGPAEESDNLICVAYRHQFDVVNESTGEAFRLHHVEANRVNFVAAIDVYEDGEAGLLLCYNYSCIYKKVCPFNGGSFLVQPSASDFQFCWNQAPYAIVCAFPYLLAFTTDSMEIRLVVNGNLVHTAVVPQLQLVASRSDIYFTATAAVNEVSSGGSSKGASARNSPQTPPGRDTPVFPSSLGEGEIQSKNLYKIPLRNLVGRSIERPLKSPLVSKVITPPTPISVGLAAIPVTHSLSLSRMEIKEIASRTRRELLGLSDEGGPKSEGAPKAKSKPRKRLEESQGGPKPGAVRSSSSDRIPSGSLESASTSEANPEGHSASSDQDPVADREGSPVSGSSPFQLTAFSDEDIIDLK</sequence>
<name>GARL3_HUMAN</name>
<proteinExistence type="evidence at protein level"/>
<feature type="chain" id="PRO_0000312215" description="GTPase-activating Rap/Ran-GAP domain-like protein 3">
    <location>
        <begin position="1"/>
        <end position="1013"/>
    </location>
</feature>
<feature type="domain" description="Rap-GAP" evidence="2">
    <location>
        <begin position="191"/>
        <end position="407"/>
    </location>
</feature>
<feature type="domain" description="CNH" evidence="3">
    <location>
        <begin position="489"/>
        <end position="800"/>
    </location>
</feature>
<feature type="region of interest" description="Disordered" evidence="4">
    <location>
        <begin position="810"/>
        <end position="842"/>
    </location>
</feature>
<feature type="region of interest" description="Disordered" evidence="4">
    <location>
        <begin position="913"/>
        <end position="1013"/>
    </location>
</feature>
<feature type="compositionally biased region" description="Low complexity" evidence="4">
    <location>
        <begin position="811"/>
        <end position="821"/>
    </location>
</feature>
<feature type="compositionally biased region" description="Low complexity" evidence="4">
    <location>
        <begin position="952"/>
        <end position="962"/>
    </location>
</feature>
<feature type="compositionally biased region" description="Polar residues" evidence="4">
    <location>
        <begin position="963"/>
        <end position="982"/>
    </location>
</feature>
<feature type="compositionally biased region" description="Polar residues" evidence="4">
    <location>
        <begin position="993"/>
        <end position="1003"/>
    </location>
</feature>
<feature type="modified residue" description="Phosphoserine" evidence="1">
    <location>
        <position position="45"/>
    </location>
</feature>
<feature type="modified residue" description="Phosphoserine" evidence="1">
    <location>
        <position position="426"/>
    </location>
</feature>
<feature type="modified residue" description="Phosphoserine" evidence="1">
    <location>
        <position position="432"/>
    </location>
</feature>
<feature type="modified residue" description="Phosphothreonine" evidence="1">
    <location>
        <position position="827"/>
    </location>
</feature>
<feature type="splice variant" id="VSP_029745" description="In isoform 4." evidence="8">
    <location>
        <begin position="1"/>
        <end position="770"/>
    </location>
</feature>
<feature type="splice variant" id="VSP_054875" description="In isoform 5." evidence="7">
    <original>MVVDFCRRFVARSLCIILMKHFCS</original>
    <variation>MK</variation>
    <location>
        <begin position="1"/>
        <end position="24"/>
    </location>
</feature>
<feature type="splice variant" id="VSP_029740" description="In isoform 3." evidence="7">
    <location>
        <begin position="170"/>
        <end position="210"/>
    </location>
</feature>
<feature type="splice variant" id="VSP_029741" description="In isoform 3." evidence="7">
    <original>ALKLKSIVRGDAP</original>
    <variation>VGFLLKPFLRDM</variation>
    <location>
        <begin position="453"/>
        <end position="465"/>
    </location>
</feature>
<feature type="splice variant" id="VSP_029742" description="In isoform 3." evidence="7">
    <location>
        <begin position="466"/>
        <end position="1013"/>
    </location>
</feature>
<feature type="splice variant" id="VSP_029743" description="In isoform 2." evidence="6">
    <original>SDIYFTATAAVNEVSSGGSSKGAS</original>
    <variation>VKFNQKICTRFHLETSWAEASNDL</variation>
    <location>
        <begin position="797"/>
        <end position="820"/>
    </location>
</feature>
<feature type="splice variant" id="VSP_029744" description="In isoform 2." evidence="6">
    <location>
        <begin position="821"/>
        <end position="1013"/>
    </location>
</feature>
<feature type="sequence variant" id="VAR_037456" description="In dbSNP:rs11550746." evidence="5">
    <original>H</original>
    <variation>R</variation>
    <location>
        <position position="108"/>
    </location>
</feature>
<feature type="sequence variant" id="VAR_037457" description="In dbSNP:rs34608132.">
    <original>A</original>
    <variation>S</variation>
    <location>
        <position position="752"/>
    </location>
</feature>
<organism>
    <name type="scientific">Homo sapiens</name>
    <name type="common">Human</name>
    <dbReference type="NCBI Taxonomy" id="9606"/>
    <lineage>
        <taxon>Eukaryota</taxon>
        <taxon>Metazoa</taxon>
        <taxon>Chordata</taxon>
        <taxon>Craniata</taxon>
        <taxon>Vertebrata</taxon>
        <taxon>Euteleostomi</taxon>
        <taxon>Mammalia</taxon>
        <taxon>Eutheria</taxon>
        <taxon>Euarchontoglires</taxon>
        <taxon>Primates</taxon>
        <taxon>Haplorrhini</taxon>
        <taxon>Catarrhini</taxon>
        <taxon>Hominidae</taxon>
        <taxon>Homo</taxon>
    </lineage>
</organism>